<name>PG069_VAR67</name>
<evidence type="ECO:0000250" key="1">
    <source>
        <dbReference type="UniProtKB" id="P68446"/>
    </source>
</evidence>
<evidence type="ECO:0000305" key="2"/>
<comment type="subcellular location">
    <subcellularLocation>
        <location evidence="1">Host cytoplasm</location>
    </subcellularLocation>
</comment>
<comment type="induction">
    <text evidence="1">Expressed in the intermediate phase of the viral replicative cycle.</text>
</comment>
<comment type="PTM">
    <text evidence="1">Myristoylated.</text>
</comment>
<comment type="similarity">
    <text evidence="2">Belongs to the orthopoxvirus OPG069 family.</text>
</comment>
<organism>
    <name type="scientific">Variola virus (isolate Human/India/Ind3/1967)</name>
    <name type="common">VARV</name>
    <name type="synonym">Smallpox virus</name>
    <dbReference type="NCBI Taxonomy" id="587200"/>
    <lineage>
        <taxon>Viruses</taxon>
        <taxon>Varidnaviria</taxon>
        <taxon>Bamfordvirae</taxon>
        <taxon>Nucleocytoviricota</taxon>
        <taxon>Pokkesviricetes</taxon>
        <taxon>Chitovirales</taxon>
        <taxon>Poxviridae</taxon>
        <taxon>Chordopoxvirinae</taxon>
        <taxon>Orthopoxvirus</taxon>
        <taxon>Variola virus</taxon>
    </lineage>
</organism>
<dbReference type="EMBL" id="X69198">
    <property type="protein sequence ID" value="CAA48989.1"/>
    <property type="molecule type" value="Genomic_DNA"/>
</dbReference>
<dbReference type="PIR" id="A36842">
    <property type="entry name" value="A36842"/>
</dbReference>
<dbReference type="RefSeq" id="NP_042092.1">
    <property type="nucleotide sequence ID" value="NC_001611.1"/>
</dbReference>
<dbReference type="GeneID" id="1486413"/>
<dbReference type="KEGG" id="vg:1486413"/>
<dbReference type="Proteomes" id="UP000002060">
    <property type="component" value="Segment"/>
</dbReference>
<dbReference type="GO" id="GO:0030430">
    <property type="term" value="C:host cell cytoplasm"/>
    <property type="evidence" value="ECO:0007669"/>
    <property type="project" value="UniProtKB-SubCell"/>
</dbReference>
<dbReference type="InterPro" id="IPR035345">
    <property type="entry name" value="E7R_orthopoxvir"/>
</dbReference>
<dbReference type="Pfam" id="PF17467">
    <property type="entry name" value="E7R"/>
    <property type="match status" value="1"/>
</dbReference>
<reference key="1">
    <citation type="journal article" date="1993" name="Virus Res.">
        <title>Analysis of the nucleotide sequence of a 43 kbp segment of the genome of variola virus India-1967 strain.</title>
        <authorList>
            <person name="Shchelkunov S.N."/>
            <person name="Blinov V.M."/>
            <person name="Resenchuk S.M."/>
            <person name="Totmenin A.V."/>
            <person name="Sandakhchiev L.S."/>
        </authorList>
    </citation>
    <scope>NUCLEOTIDE SEQUENCE [GENOMIC DNA]</scope>
</reference>
<reference key="2">
    <citation type="journal article" date="1993" name="FEBS Lett.">
        <title>Genes of variola and vaccinia viruses necessary to overcome the host protective mechanisms.</title>
        <authorList>
            <person name="Shchelkunov S.N."/>
            <person name="Blinov V.M."/>
            <person name="Sandakhchiev L.S."/>
        </authorList>
    </citation>
    <scope>NUCLEOTIDE SEQUENCE [LARGE SCALE GENOMIC DNA]</scope>
</reference>
<protein>
    <recommendedName>
        <fullName>Truncated protein OPG069</fullName>
    </recommendedName>
    <alternativeName>
        <fullName>Truncated protein E7</fullName>
    </alternativeName>
</protein>
<accession>P33864</accession>
<proteinExistence type="inferred from homology"/>
<keyword id="KW-1035">Host cytoplasm</keyword>
<keyword id="KW-0449">Lipoprotein</keyword>
<keyword id="KW-0519">Myristate</keyword>
<keyword id="KW-1185">Reference proteome</keyword>
<sequence>MISMGDIITYNGCKDNKWMLEQLSTLNFNNLHVWNSCSIGNVTRIFYTFFSYLMKDKLDI</sequence>
<feature type="chain" id="PRO_0000099460" description="Truncated protein OPG069">
    <location>
        <begin position="1"/>
        <end position="60"/>
    </location>
</feature>
<organismHost>
    <name type="scientific">Homo sapiens</name>
    <name type="common">Human</name>
    <dbReference type="NCBI Taxonomy" id="9606"/>
</organismHost>
<gene>
    <name type="primary">OPG069</name>
    <name type="ORF">E7R</name>
</gene>